<feature type="chain" id="PRO_0000098760" description="Tryptophan synthase alpha chain">
    <location>
        <begin position="1"/>
        <end position="271"/>
    </location>
</feature>
<feature type="active site" description="Proton acceptor" evidence="1">
    <location>
        <position position="49"/>
    </location>
</feature>
<feature type="active site" description="Proton acceptor" evidence="1">
    <location>
        <position position="60"/>
    </location>
</feature>
<organism>
    <name type="scientific">Burkholderia mallei (strain ATCC 23344)</name>
    <dbReference type="NCBI Taxonomy" id="243160"/>
    <lineage>
        <taxon>Bacteria</taxon>
        <taxon>Pseudomonadati</taxon>
        <taxon>Pseudomonadota</taxon>
        <taxon>Betaproteobacteria</taxon>
        <taxon>Burkholderiales</taxon>
        <taxon>Burkholderiaceae</taxon>
        <taxon>Burkholderia</taxon>
        <taxon>pseudomallei group</taxon>
    </lineage>
</organism>
<reference key="1">
    <citation type="journal article" date="2004" name="Proc. Natl. Acad. Sci. U.S.A.">
        <title>Structural flexibility in the Burkholderia mallei genome.</title>
        <authorList>
            <person name="Nierman W.C."/>
            <person name="DeShazer D."/>
            <person name="Kim H.S."/>
            <person name="Tettelin H."/>
            <person name="Nelson K.E."/>
            <person name="Feldblyum T.V."/>
            <person name="Ulrich R.L."/>
            <person name="Ronning C.M."/>
            <person name="Brinkac L.M."/>
            <person name="Daugherty S.C."/>
            <person name="Davidsen T.D."/>
            <person name="DeBoy R.T."/>
            <person name="Dimitrov G."/>
            <person name="Dodson R.J."/>
            <person name="Durkin A.S."/>
            <person name="Gwinn M.L."/>
            <person name="Haft D.H."/>
            <person name="Khouri H.M."/>
            <person name="Kolonay J.F."/>
            <person name="Madupu R."/>
            <person name="Mohammoud Y."/>
            <person name="Nelson W.C."/>
            <person name="Radune D."/>
            <person name="Romero C.M."/>
            <person name="Sarria S."/>
            <person name="Selengut J."/>
            <person name="Shamblin C."/>
            <person name="Sullivan S.A."/>
            <person name="White O."/>
            <person name="Yu Y."/>
            <person name="Zafar N."/>
            <person name="Zhou L."/>
            <person name="Fraser C.M."/>
        </authorList>
    </citation>
    <scope>NUCLEOTIDE SEQUENCE [LARGE SCALE GENOMIC DNA]</scope>
    <source>
        <strain>ATCC 23344</strain>
    </source>
</reference>
<dbReference type="EC" id="4.2.1.20" evidence="1"/>
<dbReference type="EMBL" id="CP000011">
    <property type="protein sequence ID" value="AAU45718.1"/>
    <property type="molecule type" value="Genomic_DNA"/>
</dbReference>
<dbReference type="RefSeq" id="WP_004187543.1">
    <property type="nucleotide sequence ID" value="NC_006349.2"/>
</dbReference>
<dbReference type="RefSeq" id="YP_106282.1">
    <property type="nucleotide sequence ID" value="NC_006349.2"/>
</dbReference>
<dbReference type="SMR" id="Q62AJ6"/>
<dbReference type="GeneID" id="92977654"/>
<dbReference type="KEGG" id="bma:BMAA1719"/>
<dbReference type="PATRIC" id="fig|243160.12.peg.5316"/>
<dbReference type="eggNOG" id="COG0159">
    <property type="taxonomic scope" value="Bacteria"/>
</dbReference>
<dbReference type="HOGENOM" id="CLU_016734_0_0_4"/>
<dbReference type="UniPathway" id="UPA00035">
    <property type="reaction ID" value="UER00044"/>
</dbReference>
<dbReference type="Proteomes" id="UP000006693">
    <property type="component" value="Chromosome 2"/>
</dbReference>
<dbReference type="GO" id="GO:0005829">
    <property type="term" value="C:cytosol"/>
    <property type="evidence" value="ECO:0007669"/>
    <property type="project" value="TreeGrafter"/>
</dbReference>
<dbReference type="GO" id="GO:0004834">
    <property type="term" value="F:tryptophan synthase activity"/>
    <property type="evidence" value="ECO:0007669"/>
    <property type="project" value="UniProtKB-UniRule"/>
</dbReference>
<dbReference type="CDD" id="cd04724">
    <property type="entry name" value="Tryptophan_synthase_alpha"/>
    <property type="match status" value="1"/>
</dbReference>
<dbReference type="FunFam" id="3.20.20.70:FF:000037">
    <property type="entry name" value="Tryptophan synthase alpha chain"/>
    <property type="match status" value="1"/>
</dbReference>
<dbReference type="Gene3D" id="3.20.20.70">
    <property type="entry name" value="Aldolase class I"/>
    <property type="match status" value="1"/>
</dbReference>
<dbReference type="HAMAP" id="MF_00131">
    <property type="entry name" value="Trp_synth_alpha"/>
    <property type="match status" value="1"/>
</dbReference>
<dbReference type="InterPro" id="IPR013785">
    <property type="entry name" value="Aldolase_TIM"/>
</dbReference>
<dbReference type="InterPro" id="IPR011060">
    <property type="entry name" value="RibuloseP-bd_barrel"/>
</dbReference>
<dbReference type="InterPro" id="IPR018204">
    <property type="entry name" value="Trp_synthase_alpha_AS"/>
</dbReference>
<dbReference type="InterPro" id="IPR002028">
    <property type="entry name" value="Trp_synthase_suA"/>
</dbReference>
<dbReference type="NCBIfam" id="TIGR00262">
    <property type="entry name" value="trpA"/>
    <property type="match status" value="1"/>
</dbReference>
<dbReference type="PANTHER" id="PTHR43406:SF1">
    <property type="entry name" value="TRYPTOPHAN SYNTHASE ALPHA CHAIN, CHLOROPLASTIC"/>
    <property type="match status" value="1"/>
</dbReference>
<dbReference type="PANTHER" id="PTHR43406">
    <property type="entry name" value="TRYPTOPHAN SYNTHASE, ALPHA CHAIN"/>
    <property type="match status" value="1"/>
</dbReference>
<dbReference type="Pfam" id="PF00290">
    <property type="entry name" value="Trp_syntA"/>
    <property type="match status" value="1"/>
</dbReference>
<dbReference type="SUPFAM" id="SSF51366">
    <property type="entry name" value="Ribulose-phoshate binding barrel"/>
    <property type="match status" value="1"/>
</dbReference>
<dbReference type="PROSITE" id="PS00167">
    <property type="entry name" value="TRP_SYNTHASE_ALPHA"/>
    <property type="match status" value="1"/>
</dbReference>
<accession>Q62AJ6</accession>
<comment type="function">
    <text evidence="1">The alpha subunit is responsible for the aldol cleavage of indoleglycerol phosphate to indole and glyceraldehyde 3-phosphate.</text>
</comment>
<comment type="catalytic activity">
    <reaction evidence="1">
        <text>(1S,2R)-1-C-(indol-3-yl)glycerol 3-phosphate + L-serine = D-glyceraldehyde 3-phosphate + L-tryptophan + H2O</text>
        <dbReference type="Rhea" id="RHEA:10532"/>
        <dbReference type="ChEBI" id="CHEBI:15377"/>
        <dbReference type="ChEBI" id="CHEBI:33384"/>
        <dbReference type="ChEBI" id="CHEBI:57912"/>
        <dbReference type="ChEBI" id="CHEBI:58866"/>
        <dbReference type="ChEBI" id="CHEBI:59776"/>
        <dbReference type="EC" id="4.2.1.20"/>
    </reaction>
</comment>
<comment type="pathway">
    <text evidence="1">Amino-acid biosynthesis; L-tryptophan biosynthesis; L-tryptophan from chorismate: step 5/5.</text>
</comment>
<comment type="subunit">
    <text evidence="1">Tetramer of two alpha and two beta chains.</text>
</comment>
<comment type="similarity">
    <text evidence="1">Belongs to the TrpA family.</text>
</comment>
<evidence type="ECO:0000255" key="1">
    <source>
        <dbReference type="HAMAP-Rule" id="MF_00131"/>
    </source>
</evidence>
<sequence length="271" mass="27978">MSRIQNTFAALAAQGRKGLIPFITAGDPDPAKTVELMHALAEGGADVIELGVPFSDPMADGPVIQRSSERALAKGVTLHSVLDDVKRFRARDQKTPVVLMGYANPIERMGADAFAAAARDAGVDGVLVVDYPPEESHDFAAKMRAAGIDPIFLLAPTSTDDRIAAVGQVASGYVYYVSLKGVTGAANLDVSSIAGKIPAIKSRVPLPVGVGFGIRDAATARAVAEVADAVVIGSRLVQLLEQAVPERAAAELAGFVAELRAAIDGAAKPAA</sequence>
<protein>
    <recommendedName>
        <fullName evidence="1">Tryptophan synthase alpha chain</fullName>
        <ecNumber evidence="1">4.2.1.20</ecNumber>
    </recommendedName>
</protein>
<proteinExistence type="inferred from homology"/>
<gene>
    <name evidence="1" type="primary">trpA</name>
    <name type="ordered locus">BMAA1719</name>
</gene>
<name>TRPA_BURMA</name>
<keyword id="KW-0028">Amino-acid biosynthesis</keyword>
<keyword id="KW-0057">Aromatic amino acid biosynthesis</keyword>
<keyword id="KW-0456">Lyase</keyword>
<keyword id="KW-1185">Reference proteome</keyword>
<keyword id="KW-0822">Tryptophan biosynthesis</keyword>